<reference key="1">
    <citation type="journal article" date="2003" name="Proc. Natl. Acad. Sci. U.S.A.">
        <title>The complete genome sequence of the Arabidopsis and tomato pathogen Pseudomonas syringae pv. tomato DC3000.</title>
        <authorList>
            <person name="Buell C.R."/>
            <person name="Joardar V."/>
            <person name="Lindeberg M."/>
            <person name="Selengut J."/>
            <person name="Paulsen I.T."/>
            <person name="Gwinn M.L."/>
            <person name="Dodson R.J."/>
            <person name="DeBoy R.T."/>
            <person name="Durkin A.S."/>
            <person name="Kolonay J.F."/>
            <person name="Madupu R."/>
            <person name="Daugherty S.C."/>
            <person name="Brinkac L.M."/>
            <person name="Beanan M.J."/>
            <person name="Haft D.H."/>
            <person name="Nelson W.C."/>
            <person name="Davidsen T.M."/>
            <person name="Zafar N."/>
            <person name="Zhou L."/>
            <person name="Liu J."/>
            <person name="Yuan Q."/>
            <person name="Khouri H.M."/>
            <person name="Fedorova N.B."/>
            <person name="Tran B."/>
            <person name="Russell D."/>
            <person name="Berry K.J."/>
            <person name="Utterback T.R."/>
            <person name="Van Aken S.E."/>
            <person name="Feldblyum T.V."/>
            <person name="D'Ascenzo M."/>
            <person name="Deng W.-L."/>
            <person name="Ramos A.R."/>
            <person name="Alfano J.R."/>
            <person name="Cartinhour S."/>
            <person name="Chatterjee A.K."/>
            <person name="Delaney T.P."/>
            <person name="Lazarowitz S.G."/>
            <person name="Martin G.B."/>
            <person name="Schneider D.J."/>
            <person name="Tang X."/>
            <person name="Bender C.L."/>
            <person name="White O."/>
            <person name="Fraser C.M."/>
            <person name="Collmer A."/>
        </authorList>
    </citation>
    <scope>NUCLEOTIDE SEQUENCE [LARGE SCALE GENOMIC DNA]</scope>
    <source>
        <strain>ATCC BAA-871 / DC3000</strain>
    </source>
</reference>
<gene>
    <name evidence="1" type="primary">atpB</name>
    <name type="ordered locus">PSPTO_5605</name>
</gene>
<sequence length="289" mass="31791">MAEQTASGYIQHHLQNLTFGHLPNGDWGFAHTAAEAKEMGFWAFHVDTLGWSVALGLIFVLIFRMAAKKATSGQPGALQNFVEVLVEFVDGSVKDSFHGRSAVIAPLALTIFVWVFLMNAVDLVPVDWIPQLAMMISGDEHIPFRAVPTTDPNATLGMALSVFALIIFYSIKVKGIGGFIGELTLHPFGSKNIFVQALLIPVNFLLEFVTLIAKPISLALRLFGNMYAGELVFILIAVMFGSGLLWLSGLGIVLQWAWAVFHILIITLQAFIFMMLTIVYLSMAHEDNH</sequence>
<organism>
    <name type="scientific">Pseudomonas syringae pv. tomato (strain ATCC BAA-871 / DC3000)</name>
    <dbReference type="NCBI Taxonomy" id="223283"/>
    <lineage>
        <taxon>Bacteria</taxon>
        <taxon>Pseudomonadati</taxon>
        <taxon>Pseudomonadota</taxon>
        <taxon>Gammaproteobacteria</taxon>
        <taxon>Pseudomonadales</taxon>
        <taxon>Pseudomonadaceae</taxon>
        <taxon>Pseudomonas</taxon>
    </lineage>
</organism>
<name>ATP6_PSESM</name>
<comment type="function">
    <text evidence="1">Key component of the proton channel; it plays a direct role in the translocation of protons across the membrane.</text>
</comment>
<comment type="subunit">
    <text evidence="1">F-type ATPases have 2 components, CF(1) - the catalytic core - and CF(0) - the membrane proton channel. CF(1) has five subunits: alpha(3), beta(3), gamma(1), delta(1), epsilon(1). CF(0) has three main subunits: a(1), b(2) and c(9-12). The alpha and beta chains form an alternating ring which encloses part of the gamma chain. CF(1) is attached to CF(0) by a central stalk formed by the gamma and epsilon chains, while a peripheral stalk is formed by the delta and b chains.</text>
</comment>
<comment type="subcellular location">
    <subcellularLocation>
        <location evidence="1">Cell inner membrane</location>
        <topology evidence="1">Multi-pass membrane protein</topology>
    </subcellularLocation>
</comment>
<comment type="similarity">
    <text evidence="1">Belongs to the ATPase A chain family.</text>
</comment>
<evidence type="ECO:0000255" key="1">
    <source>
        <dbReference type="HAMAP-Rule" id="MF_01393"/>
    </source>
</evidence>
<dbReference type="EMBL" id="AE016853">
    <property type="protein sequence ID" value="AAO59018.1"/>
    <property type="molecule type" value="Genomic_DNA"/>
</dbReference>
<dbReference type="RefSeq" id="NP_795323.1">
    <property type="nucleotide sequence ID" value="NC_004578.1"/>
</dbReference>
<dbReference type="RefSeq" id="WP_003377888.1">
    <property type="nucleotide sequence ID" value="NC_004578.1"/>
</dbReference>
<dbReference type="SMR" id="Q87TS8"/>
<dbReference type="STRING" id="223283.PSPTO_5605"/>
<dbReference type="GeneID" id="61789449"/>
<dbReference type="KEGG" id="pst:PSPTO_5605"/>
<dbReference type="PATRIC" id="fig|223283.9.peg.5742"/>
<dbReference type="eggNOG" id="COG0356">
    <property type="taxonomic scope" value="Bacteria"/>
</dbReference>
<dbReference type="HOGENOM" id="CLU_041018_1_0_6"/>
<dbReference type="OrthoDB" id="9789241at2"/>
<dbReference type="PhylomeDB" id="Q87TS8"/>
<dbReference type="Proteomes" id="UP000002515">
    <property type="component" value="Chromosome"/>
</dbReference>
<dbReference type="GO" id="GO:0005886">
    <property type="term" value="C:plasma membrane"/>
    <property type="evidence" value="ECO:0007669"/>
    <property type="project" value="UniProtKB-SubCell"/>
</dbReference>
<dbReference type="GO" id="GO:0045259">
    <property type="term" value="C:proton-transporting ATP synthase complex"/>
    <property type="evidence" value="ECO:0007669"/>
    <property type="project" value="UniProtKB-KW"/>
</dbReference>
<dbReference type="GO" id="GO:0046933">
    <property type="term" value="F:proton-transporting ATP synthase activity, rotational mechanism"/>
    <property type="evidence" value="ECO:0007669"/>
    <property type="project" value="UniProtKB-UniRule"/>
</dbReference>
<dbReference type="GO" id="GO:0042777">
    <property type="term" value="P:proton motive force-driven plasma membrane ATP synthesis"/>
    <property type="evidence" value="ECO:0007669"/>
    <property type="project" value="TreeGrafter"/>
</dbReference>
<dbReference type="CDD" id="cd00310">
    <property type="entry name" value="ATP-synt_Fo_a_6"/>
    <property type="match status" value="1"/>
</dbReference>
<dbReference type="FunFam" id="1.20.120.220:FF:000002">
    <property type="entry name" value="ATP synthase subunit a"/>
    <property type="match status" value="1"/>
</dbReference>
<dbReference type="Gene3D" id="1.20.120.220">
    <property type="entry name" value="ATP synthase, F0 complex, subunit A"/>
    <property type="match status" value="1"/>
</dbReference>
<dbReference type="HAMAP" id="MF_01393">
    <property type="entry name" value="ATP_synth_a_bact"/>
    <property type="match status" value="1"/>
</dbReference>
<dbReference type="InterPro" id="IPR045082">
    <property type="entry name" value="ATP_syn_F0_a_bact/chloroplast"/>
</dbReference>
<dbReference type="InterPro" id="IPR000568">
    <property type="entry name" value="ATP_synth_F0_asu"/>
</dbReference>
<dbReference type="InterPro" id="IPR023011">
    <property type="entry name" value="ATP_synth_F0_asu_AS"/>
</dbReference>
<dbReference type="InterPro" id="IPR035908">
    <property type="entry name" value="F0_ATP_A_sf"/>
</dbReference>
<dbReference type="NCBIfam" id="TIGR01131">
    <property type="entry name" value="ATP_synt_6_or_A"/>
    <property type="match status" value="1"/>
</dbReference>
<dbReference type="NCBIfam" id="NF004477">
    <property type="entry name" value="PRK05815.1-1"/>
    <property type="match status" value="1"/>
</dbReference>
<dbReference type="PANTHER" id="PTHR42823">
    <property type="entry name" value="ATP SYNTHASE SUBUNIT A, CHLOROPLASTIC"/>
    <property type="match status" value="1"/>
</dbReference>
<dbReference type="PANTHER" id="PTHR42823:SF3">
    <property type="entry name" value="ATP SYNTHASE SUBUNIT A, CHLOROPLASTIC"/>
    <property type="match status" value="1"/>
</dbReference>
<dbReference type="Pfam" id="PF00119">
    <property type="entry name" value="ATP-synt_A"/>
    <property type="match status" value="1"/>
</dbReference>
<dbReference type="SUPFAM" id="SSF81336">
    <property type="entry name" value="F1F0 ATP synthase subunit A"/>
    <property type="match status" value="1"/>
</dbReference>
<dbReference type="PROSITE" id="PS00449">
    <property type="entry name" value="ATPASE_A"/>
    <property type="match status" value="1"/>
</dbReference>
<accession>Q87TS8</accession>
<keyword id="KW-0066">ATP synthesis</keyword>
<keyword id="KW-0997">Cell inner membrane</keyword>
<keyword id="KW-1003">Cell membrane</keyword>
<keyword id="KW-0138">CF(0)</keyword>
<keyword id="KW-0375">Hydrogen ion transport</keyword>
<keyword id="KW-0406">Ion transport</keyword>
<keyword id="KW-0472">Membrane</keyword>
<keyword id="KW-1185">Reference proteome</keyword>
<keyword id="KW-0812">Transmembrane</keyword>
<keyword id="KW-1133">Transmembrane helix</keyword>
<keyword id="KW-0813">Transport</keyword>
<protein>
    <recommendedName>
        <fullName evidence="1">ATP synthase subunit a</fullName>
    </recommendedName>
    <alternativeName>
        <fullName evidence="1">ATP synthase F0 sector subunit a</fullName>
    </alternativeName>
    <alternativeName>
        <fullName evidence="1">F-ATPase subunit 6</fullName>
    </alternativeName>
</protein>
<feature type="chain" id="PRO_0000362403" description="ATP synthase subunit a">
    <location>
        <begin position="1"/>
        <end position="289"/>
    </location>
</feature>
<feature type="transmembrane region" description="Helical" evidence="1">
    <location>
        <begin position="43"/>
        <end position="63"/>
    </location>
</feature>
<feature type="transmembrane region" description="Helical" evidence="1">
    <location>
        <begin position="101"/>
        <end position="121"/>
    </location>
</feature>
<feature type="transmembrane region" description="Helical" evidence="1">
    <location>
        <begin position="160"/>
        <end position="180"/>
    </location>
</feature>
<feature type="transmembrane region" description="Helical" evidence="1">
    <location>
        <begin position="193"/>
        <end position="213"/>
    </location>
</feature>
<feature type="transmembrane region" description="Helical" evidence="1">
    <location>
        <begin position="232"/>
        <end position="252"/>
    </location>
</feature>
<feature type="transmembrane region" description="Helical" evidence="1">
    <location>
        <begin position="259"/>
        <end position="279"/>
    </location>
</feature>
<proteinExistence type="inferred from homology"/>